<reference key="1">
    <citation type="journal article" date="2001" name="Proc. Natl. Acad. Sci. U.S.A.">
        <title>Analysis of the chromosome sequence of the legume symbiont Sinorhizobium meliloti strain 1021.</title>
        <authorList>
            <person name="Capela D."/>
            <person name="Barloy-Hubler F."/>
            <person name="Gouzy J."/>
            <person name="Bothe G."/>
            <person name="Ampe F."/>
            <person name="Batut J."/>
            <person name="Boistard P."/>
            <person name="Becker A."/>
            <person name="Boutry M."/>
            <person name="Cadieu E."/>
            <person name="Dreano S."/>
            <person name="Gloux S."/>
            <person name="Godrie T."/>
            <person name="Goffeau A."/>
            <person name="Kahn D."/>
            <person name="Kiss E."/>
            <person name="Lelaure V."/>
            <person name="Masuy D."/>
            <person name="Pohl T."/>
            <person name="Portetelle D."/>
            <person name="Puehler A."/>
            <person name="Purnelle B."/>
            <person name="Ramsperger U."/>
            <person name="Renard C."/>
            <person name="Thebault P."/>
            <person name="Vandenbol M."/>
            <person name="Weidner S."/>
            <person name="Galibert F."/>
        </authorList>
    </citation>
    <scope>NUCLEOTIDE SEQUENCE [LARGE SCALE GENOMIC DNA]</scope>
    <source>
        <strain>1021</strain>
    </source>
</reference>
<reference key="2">
    <citation type="journal article" date="2001" name="Science">
        <title>The composite genome of the legume symbiont Sinorhizobium meliloti.</title>
        <authorList>
            <person name="Galibert F."/>
            <person name="Finan T.M."/>
            <person name="Long S.R."/>
            <person name="Puehler A."/>
            <person name="Abola P."/>
            <person name="Ampe F."/>
            <person name="Barloy-Hubler F."/>
            <person name="Barnett M.J."/>
            <person name="Becker A."/>
            <person name="Boistard P."/>
            <person name="Bothe G."/>
            <person name="Boutry M."/>
            <person name="Bowser L."/>
            <person name="Buhrmester J."/>
            <person name="Cadieu E."/>
            <person name="Capela D."/>
            <person name="Chain P."/>
            <person name="Cowie A."/>
            <person name="Davis R.W."/>
            <person name="Dreano S."/>
            <person name="Federspiel N.A."/>
            <person name="Fisher R.F."/>
            <person name="Gloux S."/>
            <person name="Godrie T."/>
            <person name="Goffeau A."/>
            <person name="Golding B."/>
            <person name="Gouzy J."/>
            <person name="Gurjal M."/>
            <person name="Hernandez-Lucas I."/>
            <person name="Hong A."/>
            <person name="Huizar L."/>
            <person name="Hyman R.W."/>
            <person name="Jones T."/>
            <person name="Kahn D."/>
            <person name="Kahn M.L."/>
            <person name="Kalman S."/>
            <person name="Keating D.H."/>
            <person name="Kiss E."/>
            <person name="Komp C."/>
            <person name="Lelaure V."/>
            <person name="Masuy D."/>
            <person name="Palm C."/>
            <person name="Peck M.C."/>
            <person name="Pohl T.M."/>
            <person name="Portetelle D."/>
            <person name="Purnelle B."/>
            <person name="Ramsperger U."/>
            <person name="Surzycki R."/>
            <person name="Thebault P."/>
            <person name="Vandenbol M."/>
            <person name="Vorhoelter F.J."/>
            <person name="Weidner S."/>
            <person name="Wells D.H."/>
            <person name="Wong K."/>
            <person name="Yeh K.-C."/>
            <person name="Batut J."/>
        </authorList>
    </citation>
    <scope>NUCLEOTIDE SEQUENCE [LARGE SCALE GENOMIC DNA]</scope>
    <source>
        <strain>1021</strain>
    </source>
</reference>
<dbReference type="EMBL" id="AL591688">
    <property type="protein sequence ID" value="CAC45924.1"/>
    <property type="molecule type" value="Genomic_DNA"/>
</dbReference>
<dbReference type="RefSeq" id="NP_385451.1">
    <property type="nucleotide sequence ID" value="NC_003047.1"/>
</dbReference>
<dbReference type="RefSeq" id="WP_003536190.1">
    <property type="nucleotide sequence ID" value="NC_003047.1"/>
</dbReference>
<dbReference type="SMR" id="Q92QI0"/>
<dbReference type="EnsemblBacteria" id="CAC45924">
    <property type="protein sequence ID" value="CAC45924"/>
    <property type="gene ID" value="SMc01320"/>
</dbReference>
<dbReference type="GeneID" id="89575669"/>
<dbReference type="KEGG" id="sme:SMc01320"/>
<dbReference type="PATRIC" id="fig|266834.11.peg.2760"/>
<dbReference type="eggNOG" id="COG0081">
    <property type="taxonomic scope" value="Bacteria"/>
</dbReference>
<dbReference type="HOGENOM" id="CLU_062853_0_0_5"/>
<dbReference type="OrthoDB" id="9803740at2"/>
<dbReference type="Proteomes" id="UP000001976">
    <property type="component" value="Chromosome"/>
</dbReference>
<dbReference type="GO" id="GO:0022625">
    <property type="term" value="C:cytosolic large ribosomal subunit"/>
    <property type="evidence" value="ECO:0007669"/>
    <property type="project" value="TreeGrafter"/>
</dbReference>
<dbReference type="GO" id="GO:0019843">
    <property type="term" value="F:rRNA binding"/>
    <property type="evidence" value="ECO:0007669"/>
    <property type="project" value="UniProtKB-UniRule"/>
</dbReference>
<dbReference type="GO" id="GO:0003735">
    <property type="term" value="F:structural constituent of ribosome"/>
    <property type="evidence" value="ECO:0007669"/>
    <property type="project" value="InterPro"/>
</dbReference>
<dbReference type="GO" id="GO:0000049">
    <property type="term" value="F:tRNA binding"/>
    <property type="evidence" value="ECO:0007669"/>
    <property type="project" value="UniProtKB-KW"/>
</dbReference>
<dbReference type="GO" id="GO:0006417">
    <property type="term" value="P:regulation of translation"/>
    <property type="evidence" value="ECO:0007669"/>
    <property type="project" value="UniProtKB-KW"/>
</dbReference>
<dbReference type="GO" id="GO:0006412">
    <property type="term" value="P:translation"/>
    <property type="evidence" value="ECO:0007669"/>
    <property type="project" value="UniProtKB-UniRule"/>
</dbReference>
<dbReference type="CDD" id="cd00403">
    <property type="entry name" value="Ribosomal_L1"/>
    <property type="match status" value="1"/>
</dbReference>
<dbReference type="FunFam" id="3.40.50.790:FF:000001">
    <property type="entry name" value="50S ribosomal protein L1"/>
    <property type="match status" value="1"/>
</dbReference>
<dbReference type="Gene3D" id="3.30.190.20">
    <property type="match status" value="1"/>
</dbReference>
<dbReference type="Gene3D" id="3.40.50.790">
    <property type="match status" value="1"/>
</dbReference>
<dbReference type="HAMAP" id="MF_01318_B">
    <property type="entry name" value="Ribosomal_uL1_B"/>
    <property type="match status" value="1"/>
</dbReference>
<dbReference type="InterPro" id="IPR005878">
    <property type="entry name" value="Ribosom_uL1_bac-type"/>
</dbReference>
<dbReference type="InterPro" id="IPR002143">
    <property type="entry name" value="Ribosomal_uL1"/>
</dbReference>
<dbReference type="InterPro" id="IPR023674">
    <property type="entry name" value="Ribosomal_uL1-like"/>
</dbReference>
<dbReference type="InterPro" id="IPR028364">
    <property type="entry name" value="Ribosomal_uL1/biogenesis"/>
</dbReference>
<dbReference type="InterPro" id="IPR016095">
    <property type="entry name" value="Ribosomal_uL1_3-a/b-sand"/>
</dbReference>
<dbReference type="InterPro" id="IPR023673">
    <property type="entry name" value="Ribosomal_uL1_CS"/>
</dbReference>
<dbReference type="NCBIfam" id="TIGR01169">
    <property type="entry name" value="rplA_bact"/>
    <property type="match status" value="1"/>
</dbReference>
<dbReference type="PANTHER" id="PTHR36427">
    <property type="entry name" value="54S RIBOSOMAL PROTEIN L1, MITOCHONDRIAL"/>
    <property type="match status" value="1"/>
</dbReference>
<dbReference type="PANTHER" id="PTHR36427:SF3">
    <property type="entry name" value="LARGE RIBOSOMAL SUBUNIT PROTEIN UL1M"/>
    <property type="match status" value="1"/>
</dbReference>
<dbReference type="Pfam" id="PF00687">
    <property type="entry name" value="Ribosomal_L1"/>
    <property type="match status" value="1"/>
</dbReference>
<dbReference type="PIRSF" id="PIRSF002155">
    <property type="entry name" value="Ribosomal_L1"/>
    <property type="match status" value="1"/>
</dbReference>
<dbReference type="SUPFAM" id="SSF56808">
    <property type="entry name" value="Ribosomal protein L1"/>
    <property type="match status" value="1"/>
</dbReference>
<dbReference type="PROSITE" id="PS01199">
    <property type="entry name" value="RIBOSOMAL_L1"/>
    <property type="match status" value="1"/>
</dbReference>
<accession>Q92QI0</accession>
<evidence type="ECO:0000255" key="1">
    <source>
        <dbReference type="HAMAP-Rule" id="MF_01318"/>
    </source>
</evidence>
<evidence type="ECO:0000305" key="2"/>
<feature type="chain" id="PRO_0000125719" description="Large ribosomal subunit protein uL1">
    <location>
        <begin position="1"/>
        <end position="232"/>
    </location>
</feature>
<comment type="function">
    <text evidence="1">Binds directly to 23S rRNA. The L1 stalk is quite mobile in the ribosome, and is involved in E site tRNA release.</text>
</comment>
<comment type="function">
    <text evidence="1">Protein L1 is also a translational repressor protein, it controls the translation of the L11 operon by binding to its mRNA.</text>
</comment>
<comment type="subunit">
    <text evidence="1">Part of the 50S ribosomal subunit.</text>
</comment>
<comment type="similarity">
    <text evidence="1">Belongs to the universal ribosomal protein uL1 family.</text>
</comment>
<proteinExistence type="inferred from homology"/>
<protein>
    <recommendedName>
        <fullName evidence="1">Large ribosomal subunit protein uL1</fullName>
    </recommendedName>
    <alternativeName>
        <fullName evidence="2">50S ribosomal protein L1</fullName>
    </alternativeName>
</protein>
<organism>
    <name type="scientific">Rhizobium meliloti (strain 1021)</name>
    <name type="common">Ensifer meliloti</name>
    <name type="synonym">Sinorhizobium meliloti</name>
    <dbReference type="NCBI Taxonomy" id="266834"/>
    <lineage>
        <taxon>Bacteria</taxon>
        <taxon>Pseudomonadati</taxon>
        <taxon>Pseudomonadota</taxon>
        <taxon>Alphaproteobacteria</taxon>
        <taxon>Hyphomicrobiales</taxon>
        <taxon>Rhizobiaceae</taxon>
        <taxon>Sinorhizobium/Ensifer group</taxon>
        <taxon>Sinorhizobium</taxon>
    </lineage>
</organism>
<gene>
    <name evidence="1" type="primary">rplA</name>
    <name type="ordered locus">R01345</name>
    <name type="ORF">SMc01320</name>
</gene>
<keyword id="KW-1185">Reference proteome</keyword>
<keyword id="KW-0678">Repressor</keyword>
<keyword id="KW-0687">Ribonucleoprotein</keyword>
<keyword id="KW-0689">Ribosomal protein</keyword>
<keyword id="KW-0694">RNA-binding</keyword>
<keyword id="KW-0699">rRNA-binding</keyword>
<keyword id="KW-0810">Translation regulation</keyword>
<keyword id="KW-0820">tRNA-binding</keyword>
<name>RL1_RHIME</name>
<sequence length="232" mass="24150">MAKIAKRVQKSREGVDPTKLYGLTEAVTLVKERATAKFDETIEVAMNLGVDPRHADQMVRGVVNLPNGTGRSVRVAVFARGAKADEAKAAGADVVGAEELVEIVQGGKIDFDRCIATPDMMPLVGRLGKVLGPRGMMPNPKVGTVTMDVTGAVKASKGGAVEFRVEKAGIVHAGIGKASFDAKALEENIRAFADAVIKAKPTGAKGNYVKRVAVSSTMGPGLKVDPATISAA</sequence>